<proteinExistence type="evidence at protein level"/>
<feature type="signal peptide" evidence="2">
    <location>
        <begin position="1"/>
        <end position="14"/>
    </location>
</feature>
<feature type="chain" id="PRO_0000435691" description="Monoglucosyldiacylglycerol epimerase">
    <location>
        <begin position="15"/>
        <end position="410"/>
    </location>
</feature>
<feature type="transmembrane region" description="Helical" evidence="2">
    <location>
        <begin position="71"/>
        <end position="91"/>
    </location>
</feature>
<feature type="transmembrane region" description="Helical" evidence="2">
    <location>
        <begin position="96"/>
        <end position="116"/>
    </location>
</feature>
<feature type="transmembrane region" description="Helical" evidence="2">
    <location>
        <begin position="380"/>
        <end position="400"/>
    </location>
</feature>
<feature type="active site" description="Proton acceptor" evidence="1">
    <location>
        <position position="320"/>
    </location>
</feature>
<keyword id="KW-0119">Carbohydrate metabolism</keyword>
<keyword id="KW-0319">Glycerol metabolism</keyword>
<keyword id="KW-0413">Isomerase</keyword>
<keyword id="KW-0443">Lipid metabolism</keyword>
<keyword id="KW-0472">Membrane</keyword>
<keyword id="KW-0602">Photosynthesis</keyword>
<keyword id="KW-1185">Reference proteome</keyword>
<keyword id="KW-0732">Signal</keyword>
<keyword id="KW-0812">Transmembrane</keyword>
<keyword id="KW-1133">Transmembrane helix</keyword>
<evidence type="ECO:0000250" key="1">
    <source>
        <dbReference type="UniProtKB" id="Q7Z4W1"/>
    </source>
</evidence>
<evidence type="ECO:0000255" key="2"/>
<evidence type="ECO:0000269" key="3">
    <source>
    </source>
</evidence>
<evidence type="ECO:0000303" key="4">
    <source>
    </source>
</evidence>
<evidence type="ECO:0000305" key="5"/>
<organism>
    <name type="scientific">Synechocystis sp. (strain ATCC 27184 / PCC 6803 / Kazusa)</name>
    <dbReference type="NCBI Taxonomy" id="1111708"/>
    <lineage>
        <taxon>Bacteria</taxon>
        <taxon>Bacillati</taxon>
        <taxon>Cyanobacteriota</taxon>
        <taxon>Cyanophyceae</taxon>
        <taxon>Synechococcales</taxon>
        <taxon>Merismopediaceae</taxon>
        <taxon>Synechocystis</taxon>
    </lineage>
</organism>
<dbReference type="EC" id="5.1.3.34" evidence="3"/>
<dbReference type="EMBL" id="BA000022">
    <property type="protein sequence ID" value="BAA18256.1"/>
    <property type="molecule type" value="Genomic_DNA"/>
</dbReference>
<dbReference type="PIR" id="S75695">
    <property type="entry name" value="S75695"/>
</dbReference>
<dbReference type="SMR" id="P74167"/>
<dbReference type="STRING" id="1148.gene:10499132"/>
<dbReference type="PaxDb" id="1148-1653341"/>
<dbReference type="EnsemblBacteria" id="BAA18256">
    <property type="protein sequence ID" value="BAA18256"/>
    <property type="gene ID" value="BAA18256"/>
</dbReference>
<dbReference type="KEGG" id="syn:sll1376"/>
<dbReference type="eggNOG" id="COG0300">
    <property type="taxonomic scope" value="Bacteria"/>
</dbReference>
<dbReference type="eggNOG" id="COG3000">
    <property type="taxonomic scope" value="Bacteria"/>
</dbReference>
<dbReference type="InParanoid" id="P74167"/>
<dbReference type="BioCyc" id="MetaCyc:MONOMER-19314"/>
<dbReference type="BRENDA" id="5.1.3.34">
    <property type="organism ID" value="382"/>
</dbReference>
<dbReference type="Proteomes" id="UP000001425">
    <property type="component" value="Chromosome"/>
</dbReference>
<dbReference type="GO" id="GO:0016020">
    <property type="term" value="C:membrane"/>
    <property type="evidence" value="ECO:0007669"/>
    <property type="project" value="UniProtKB-SubCell"/>
</dbReference>
<dbReference type="GO" id="GO:0016857">
    <property type="term" value="F:racemase and epimerase activity, acting on carbohydrates and derivatives"/>
    <property type="evidence" value="ECO:0000314"/>
    <property type="project" value="UniProtKB"/>
</dbReference>
<dbReference type="GO" id="GO:0006071">
    <property type="term" value="P:glycerol metabolic process"/>
    <property type="evidence" value="ECO:0007669"/>
    <property type="project" value="UniProtKB-KW"/>
</dbReference>
<dbReference type="GO" id="GO:0006629">
    <property type="term" value="P:lipid metabolic process"/>
    <property type="evidence" value="ECO:0007669"/>
    <property type="project" value="UniProtKB-KW"/>
</dbReference>
<dbReference type="GO" id="GO:0015979">
    <property type="term" value="P:photosynthesis"/>
    <property type="evidence" value="ECO:0007669"/>
    <property type="project" value="UniProtKB-KW"/>
</dbReference>
<dbReference type="Gene3D" id="3.40.50.720">
    <property type="entry name" value="NAD(P)-binding Rossmann-like Domain"/>
    <property type="match status" value="1"/>
</dbReference>
<dbReference type="InterPro" id="IPR053354">
    <property type="entry name" value="MGDG_epimerase"/>
</dbReference>
<dbReference type="InterPro" id="IPR036291">
    <property type="entry name" value="NAD(P)-bd_dom_sf"/>
</dbReference>
<dbReference type="InterPro" id="IPR002347">
    <property type="entry name" value="SDR_fam"/>
</dbReference>
<dbReference type="NCBIfam" id="NF005653">
    <property type="entry name" value="PRK07424.1"/>
    <property type="match status" value="1"/>
</dbReference>
<dbReference type="PANTHER" id="PTHR43558">
    <property type="entry name" value="REDUCTASE, PUTATIVE (AFU_ORTHOLOGUE AFUA_3G10540)-RELATED"/>
    <property type="match status" value="1"/>
</dbReference>
<dbReference type="PANTHER" id="PTHR43558:SF6">
    <property type="entry name" value="REDUCTASE, PUTATIVE (AFU_ORTHOLOGUE AFUA_3G10540)-RELATED"/>
    <property type="match status" value="1"/>
</dbReference>
<dbReference type="Pfam" id="PF00106">
    <property type="entry name" value="adh_short"/>
    <property type="match status" value="1"/>
</dbReference>
<dbReference type="SUPFAM" id="SSF51735">
    <property type="entry name" value="NAD(P)-binding Rossmann-fold domains"/>
    <property type="match status" value="1"/>
</dbReference>
<reference key="1">
    <citation type="journal article" date="1996" name="DNA Res.">
        <title>Sequence analysis of the genome of the unicellular cyanobacterium Synechocystis sp. strain PCC6803. II. Sequence determination of the entire genome and assignment of potential protein-coding regions.</title>
        <authorList>
            <person name="Kaneko T."/>
            <person name="Sato S."/>
            <person name="Kotani H."/>
            <person name="Tanaka A."/>
            <person name="Asamizu E."/>
            <person name="Nakamura Y."/>
            <person name="Miyajima N."/>
            <person name="Hirosawa M."/>
            <person name="Sugiura M."/>
            <person name="Sasamoto S."/>
            <person name="Kimura T."/>
            <person name="Hosouchi T."/>
            <person name="Matsuno A."/>
            <person name="Muraki A."/>
            <person name="Nakazaki N."/>
            <person name="Naruo K."/>
            <person name="Okumura S."/>
            <person name="Shimpo S."/>
            <person name="Takeuchi C."/>
            <person name="Wada T."/>
            <person name="Watanabe A."/>
            <person name="Yamada M."/>
            <person name="Yasuda M."/>
            <person name="Tabata S."/>
        </authorList>
    </citation>
    <scope>NUCLEOTIDE SEQUENCE [LARGE SCALE GENOMIC DNA]</scope>
    <source>
        <strain>ATCC 27184 / PCC 6803 / Kazusa</strain>
    </source>
</reference>
<reference key="2">
    <citation type="journal article" date="2014" name="Proc. Natl. Acad. Sci. U.S.A.">
        <title>Oxygenic photosynthesis without galactolipids.</title>
        <authorList>
            <person name="Awai K."/>
            <person name="Ohta H."/>
            <person name="Sato N."/>
        </authorList>
    </citation>
    <scope>FUNCTION</scope>
    <scope>CATALYTIC ACTIVITY</scope>
    <scope>DISRUPTION PHENOTYPE</scope>
    <source>
        <strain>ATCC 27184 / PCC 6803 / Kazusa</strain>
    </source>
</reference>
<accession>P74167</accession>
<name>MGDE_SYNY3</name>
<protein>
    <recommendedName>
        <fullName evidence="4">Monoglucosyldiacylglycerol epimerase</fullName>
        <shortName evidence="4">GlcDG epimerase</shortName>
        <ecNumber evidence="3">5.1.3.34</ecNumber>
    </recommendedName>
</protein>
<comment type="function">
    <text evidence="3">Involved in the biosynthesis of galactolipids found in the photosynthetic membranes. Catalyzes the isomerization of monoglucosyldiacylglycerol (GlcDG) to yield monogalactosyldiacylglycerol (MGDG).</text>
</comment>
<comment type="catalytic activity">
    <reaction evidence="3">
        <text>a 1,2-diacyl-3-O-(beta-D-glucopyranosyl)-sn-glycerol = a 1,2-diacyl-3-O-(beta-D-galactosyl)-sn-glycerol</text>
        <dbReference type="Rhea" id="RHEA:46928"/>
        <dbReference type="ChEBI" id="CHEBI:17615"/>
        <dbReference type="ChEBI" id="CHEBI:75799"/>
        <dbReference type="EC" id="5.1.3.34"/>
    </reaction>
</comment>
<comment type="subcellular location">
    <subcellularLocation>
        <location evidence="2">Membrane</location>
        <topology evidence="2">Multi-pass membrane protein</topology>
    </subcellularLocation>
</comment>
<comment type="disruption phenotype">
    <text evidence="3">The mutant lacks both monogalactosyldiacylglycerol (MGDG) and digalactosyldiacylglycerol (DGDG), and accumulates GlcDG. It possesses intact thylakoid membranes and shows normal maximal photosynthetic activity, albeit with reduced utilization of light energy.</text>
</comment>
<comment type="similarity">
    <text evidence="5">Belongs to the short-chain dehydrogenases/reductases (SDR) family.</text>
</comment>
<gene>
    <name evidence="4" type="primary">MgdE</name>
    <name type="ordered locus">sll1376</name>
</gene>
<sequence>MAMAWLMGLGLALASVLWVELVRDCYHALAHVWSPLYRLHGWHHRVFRSDLSVVSTEIYQKAHWYNDVPEALVMLAFGIWPPLLTWMWQGFSQWPLILAASAGMVYTLGFLLSAIARGVGLPNADEITDLTHRPGPFLTPPAPWMVNRTYHWRHHFDDPNAYFCGTLTLVDKMLGTALSLKGKKIAVTGASGGFGQALLQELHQQGAKAIAITSCGQEVTVIGAEKTIPIRTEQWCIGQEDQLKDLLAEIDVLVINHGVNVHQRRDGQAIQEAYEVNTFSALRLMELFLATVKTNRHIATKEIWVNTSEAEVNPAFSPLYELSKRALGDVVTLKRLDSPCVIRKLILGPFKSKLNPVGIMSAAWVARQVVKGVKRDSRNIIVTINPITFIAFPVKEFFVSLYFRCFTKKS</sequence>